<feature type="chain" id="PRO_0000245203" description="FACT complex subunit POB3">
    <location>
        <begin position="1"/>
        <end position="543"/>
    </location>
</feature>
<feature type="region of interest" description="Disordered" evidence="3">
    <location>
        <begin position="183"/>
        <end position="204"/>
    </location>
</feature>
<feature type="region of interest" description="Disordered" evidence="3">
    <location>
        <begin position="472"/>
        <end position="543"/>
    </location>
</feature>
<feature type="compositionally biased region" description="Acidic residues" evidence="3">
    <location>
        <begin position="478"/>
        <end position="497"/>
    </location>
</feature>
<feature type="compositionally biased region" description="Acidic residues" evidence="3">
    <location>
        <begin position="505"/>
        <end position="531"/>
    </location>
</feature>
<feature type="compositionally biased region" description="Basic and acidic residues" evidence="3">
    <location>
        <begin position="532"/>
        <end position="543"/>
    </location>
</feature>
<dbReference type="EMBL" id="CR380958">
    <property type="protein sequence ID" value="CAG62236.1"/>
    <property type="molecule type" value="Genomic_DNA"/>
</dbReference>
<dbReference type="RefSeq" id="XP_449262.1">
    <property type="nucleotide sequence ID" value="XM_449262.1"/>
</dbReference>
<dbReference type="SMR" id="Q6FKI2"/>
<dbReference type="FunCoup" id="Q6FKI2">
    <property type="interactions" value="1139"/>
</dbReference>
<dbReference type="STRING" id="284593.Q6FKI2"/>
<dbReference type="EnsemblFungi" id="CAGL0L11352g-T">
    <property type="protein sequence ID" value="CAGL0L11352g-T-p1"/>
    <property type="gene ID" value="CAGL0L11352g"/>
</dbReference>
<dbReference type="KEGG" id="cgr:2890961"/>
<dbReference type="CGD" id="CAL0136134">
    <property type="gene designation" value="CAGL0L11352g"/>
</dbReference>
<dbReference type="VEuPathDB" id="FungiDB:CAGL0L11352g"/>
<dbReference type="eggNOG" id="KOG0526">
    <property type="taxonomic scope" value="Eukaryota"/>
</dbReference>
<dbReference type="HOGENOM" id="CLU_017374_3_0_1"/>
<dbReference type="InParanoid" id="Q6FKI2"/>
<dbReference type="OMA" id="QVVTKIF"/>
<dbReference type="Proteomes" id="UP000002428">
    <property type="component" value="Chromosome L"/>
</dbReference>
<dbReference type="GO" id="GO:0000781">
    <property type="term" value="C:chromosome, telomeric region"/>
    <property type="evidence" value="ECO:0007669"/>
    <property type="project" value="GOC"/>
</dbReference>
<dbReference type="GO" id="GO:0035101">
    <property type="term" value="C:FACT complex"/>
    <property type="evidence" value="ECO:0007669"/>
    <property type="project" value="EnsemblFungi"/>
</dbReference>
<dbReference type="GO" id="GO:0003677">
    <property type="term" value="F:DNA binding"/>
    <property type="evidence" value="ECO:0007669"/>
    <property type="project" value="InterPro"/>
</dbReference>
<dbReference type="GO" id="GO:0042393">
    <property type="term" value="F:histone binding"/>
    <property type="evidence" value="ECO:0007669"/>
    <property type="project" value="EnsemblFungi"/>
</dbReference>
<dbReference type="GO" id="GO:0031491">
    <property type="term" value="F:nucleosome binding"/>
    <property type="evidence" value="ECO:0007669"/>
    <property type="project" value="EnsemblFungi"/>
</dbReference>
<dbReference type="GO" id="GO:0006281">
    <property type="term" value="P:DNA repair"/>
    <property type="evidence" value="ECO:0007669"/>
    <property type="project" value="UniProtKB-KW"/>
</dbReference>
<dbReference type="GO" id="GO:0006335">
    <property type="term" value="P:DNA replication-dependent chromatin assembly"/>
    <property type="evidence" value="ECO:0007669"/>
    <property type="project" value="EnsemblFungi"/>
</dbReference>
<dbReference type="GO" id="GO:0006261">
    <property type="term" value="P:DNA-templated DNA replication"/>
    <property type="evidence" value="ECO:0007669"/>
    <property type="project" value="EnsemblFungi"/>
</dbReference>
<dbReference type="GO" id="GO:0034728">
    <property type="term" value="P:nucleosome organization"/>
    <property type="evidence" value="ECO:0007669"/>
    <property type="project" value="EnsemblFungi"/>
</dbReference>
<dbReference type="GO" id="GO:0031508">
    <property type="term" value="P:pericentric heterochromatin formation"/>
    <property type="evidence" value="ECO:0007669"/>
    <property type="project" value="EnsemblFungi"/>
</dbReference>
<dbReference type="GO" id="GO:0045899">
    <property type="term" value="P:positive regulation of RNA polymerase II transcription preinitiation complex assembly"/>
    <property type="evidence" value="ECO:0007669"/>
    <property type="project" value="EnsemblFungi"/>
</dbReference>
<dbReference type="GO" id="GO:0030466">
    <property type="term" value="P:silent mating-type cassette heterochromatin formation"/>
    <property type="evidence" value="ECO:0007669"/>
    <property type="project" value="EnsemblFungi"/>
</dbReference>
<dbReference type="GO" id="GO:0031509">
    <property type="term" value="P:subtelomeric heterochromatin formation"/>
    <property type="evidence" value="ECO:0007669"/>
    <property type="project" value="EnsemblFungi"/>
</dbReference>
<dbReference type="CDD" id="cd13230">
    <property type="entry name" value="PH1_SSRP1-like"/>
    <property type="match status" value="1"/>
</dbReference>
<dbReference type="CDD" id="cd13231">
    <property type="entry name" value="PH2_SSRP1-like"/>
    <property type="match status" value="1"/>
</dbReference>
<dbReference type="CDD" id="cd13229">
    <property type="entry name" value="PH_TFIIH"/>
    <property type="match status" value="1"/>
</dbReference>
<dbReference type="FunFam" id="2.30.29.30:FF:000398">
    <property type="entry name" value="FACT complex subunit POB3"/>
    <property type="match status" value="1"/>
</dbReference>
<dbReference type="FunFam" id="2.30.29.150:FF:000001">
    <property type="entry name" value="Fact complex subunit ssrp1"/>
    <property type="match status" value="1"/>
</dbReference>
<dbReference type="FunFam" id="2.30.29.30:FF:000098">
    <property type="entry name" value="Fact complex subunit ssrp1"/>
    <property type="match status" value="1"/>
</dbReference>
<dbReference type="Gene3D" id="2.30.29.150">
    <property type="match status" value="1"/>
</dbReference>
<dbReference type="Gene3D" id="2.30.29.30">
    <property type="entry name" value="Pleckstrin-homology domain (PH domain)/Phosphotyrosine-binding domain (PTB)"/>
    <property type="match status" value="2"/>
</dbReference>
<dbReference type="Gene3D" id="2.30.29.220">
    <property type="entry name" value="Structure-specific recognition protein (SSRP1)"/>
    <property type="match status" value="1"/>
</dbReference>
<dbReference type="InterPro" id="IPR011993">
    <property type="entry name" value="PH-like_dom_sf"/>
</dbReference>
<dbReference type="InterPro" id="IPR013719">
    <property type="entry name" value="RTT106/SPT16-like_middle_dom"/>
</dbReference>
<dbReference type="InterPro" id="IPR050454">
    <property type="entry name" value="RTT106/SSRP1_HistChap/FACT"/>
</dbReference>
<dbReference type="InterPro" id="IPR048993">
    <property type="entry name" value="SSRP1-like_PH1"/>
</dbReference>
<dbReference type="InterPro" id="IPR000969">
    <property type="entry name" value="SSRP1/POB3"/>
</dbReference>
<dbReference type="InterPro" id="IPR035417">
    <property type="entry name" value="SSRP1/POB3_N"/>
</dbReference>
<dbReference type="InterPro" id="IPR024954">
    <property type="entry name" value="SSRP1_DD"/>
</dbReference>
<dbReference type="InterPro" id="IPR038167">
    <property type="entry name" value="SSRP1_sf"/>
</dbReference>
<dbReference type="PANTHER" id="PTHR45849">
    <property type="entry name" value="FACT COMPLEX SUBUNIT SSRP1"/>
    <property type="match status" value="1"/>
</dbReference>
<dbReference type="PANTHER" id="PTHR45849:SF1">
    <property type="entry name" value="FACT COMPLEX SUBUNIT SSRP1"/>
    <property type="match status" value="1"/>
</dbReference>
<dbReference type="Pfam" id="PF21103">
    <property type="entry name" value="PH1_SSRP1-like"/>
    <property type="match status" value="1"/>
</dbReference>
<dbReference type="Pfam" id="PF17292">
    <property type="entry name" value="POB3_N"/>
    <property type="match status" value="1"/>
</dbReference>
<dbReference type="Pfam" id="PF08512">
    <property type="entry name" value="Rttp106-like_middle"/>
    <property type="match status" value="1"/>
</dbReference>
<dbReference type="Pfam" id="PF03531">
    <property type="entry name" value="SSrecog"/>
    <property type="match status" value="1"/>
</dbReference>
<dbReference type="PRINTS" id="PR00887">
    <property type="entry name" value="SSRCOGNITION"/>
</dbReference>
<dbReference type="SMART" id="SM01287">
    <property type="entry name" value="Rtt106"/>
    <property type="match status" value="1"/>
</dbReference>
<dbReference type="SUPFAM" id="SSF50729">
    <property type="entry name" value="PH domain-like"/>
    <property type="match status" value="1"/>
</dbReference>
<organism>
    <name type="scientific">Candida glabrata (strain ATCC 2001 / BCRC 20586 / JCM 3761 / NBRC 0622 / NRRL Y-65 / CBS 138)</name>
    <name type="common">Yeast</name>
    <name type="synonym">Nakaseomyces glabratus</name>
    <dbReference type="NCBI Taxonomy" id="284593"/>
    <lineage>
        <taxon>Eukaryota</taxon>
        <taxon>Fungi</taxon>
        <taxon>Dikarya</taxon>
        <taxon>Ascomycota</taxon>
        <taxon>Saccharomycotina</taxon>
        <taxon>Saccharomycetes</taxon>
        <taxon>Saccharomycetales</taxon>
        <taxon>Saccharomycetaceae</taxon>
        <taxon>Nakaseomyces</taxon>
    </lineage>
</organism>
<reference key="1">
    <citation type="journal article" date="2004" name="Nature">
        <title>Genome evolution in yeasts.</title>
        <authorList>
            <person name="Dujon B."/>
            <person name="Sherman D."/>
            <person name="Fischer G."/>
            <person name="Durrens P."/>
            <person name="Casaregola S."/>
            <person name="Lafontaine I."/>
            <person name="de Montigny J."/>
            <person name="Marck C."/>
            <person name="Neuveglise C."/>
            <person name="Talla E."/>
            <person name="Goffard N."/>
            <person name="Frangeul L."/>
            <person name="Aigle M."/>
            <person name="Anthouard V."/>
            <person name="Babour A."/>
            <person name="Barbe V."/>
            <person name="Barnay S."/>
            <person name="Blanchin S."/>
            <person name="Beckerich J.-M."/>
            <person name="Beyne E."/>
            <person name="Bleykasten C."/>
            <person name="Boisrame A."/>
            <person name="Boyer J."/>
            <person name="Cattolico L."/>
            <person name="Confanioleri F."/>
            <person name="de Daruvar A."/>
            <person name="Despons L."/>
            <person name="Fabre E."/>
            <person name="Fairhead C."/>
            <person name="Ferry-Dumazet H."/>
            <person name="Groppi A."/>
            <person name="Hantraye F."/>
            <person name="Hennequin C."/>
            <person name="Jauniaux N."/>
            <person name="Joyet P."/>
            <person name="Kachouri R."/>
            <person name="Kerrest A."/>
            <person name="Koszul R."/>
            <person name="Lemaire M."/>
            <person name="Lesur I."/>
            <person name="Ma L."/>
            <person name="Muller H."/>
            <person name="Nicaud J.-M."/>
            <person name="Nikolski M."/>
            <person name="Oztas S."/>
            <person name="Ozier-Kalogeropoulos O."/>
            <person name="Pellenz S."/>
            <person name="Potier S."/>
            <person name="Richard G.-F."/>
            <person name="Straub M.-L."/>
            <person name="Suleau A."/>
            <person name="Swennen D."/>
            <person name="Tekaia F."/>
            <person name="Wesolowski-Louvel M."/>
            <person name="Westhof E."/>
            <person name="Wirth B."/>
            <person name="Zeniou-Meyer M."/>
            <person name="Zivanovic Y."/>
            <person name="Bolotin-Fukuhara M."/>
            <person name="Thierry A."/>
            <person name="Bouchier C."/>
            <person name="Caudron B."/>
            <person name="Scarpelli C."/>
            <person name="Gaillardin C."/>
            <person name="Weissenbach J."/>
            <person name="Wincker P."/>
            <person name="Souciet J.-L."/>
        </authorList>
    </citation>
    <scope>NUCLEOTIDE SEQUENCE [LARGE SCALE GENOMIC DNA]</scope>
    <source>
        <strain>ATCC 2001 / BCRC 20586 / JCM 3761 / NBRC 0622 / NRRL Y-65 / CBS 138</strain>
    </source>
</reference>
<sequence length="543" mass="61452">MSTDFDRIFMNQSKFGGRFRIADSGLGWKVSTSGGSASAQNKAPFLLPATELSTVQWSRGCRGFELKINTKNQGVIQLEGFSEDDFNIIKGDFHRRFSIQVEHKEHSLRGWNWGQTDLARNEMVFALNGKPVFEIPYARINNTNLTAKNEVAVEFNIQDDTYQPAGDEMVEMRFYLPGSVVVDEDQPAPKKEGEEEGEEAAETETKSLAEAFYEELKNKADIGEIAGDAIVSFQDVFFTTPRGRYDIDIYENSIRLRGKTYEYKLQHNQIQRIVSLPKADDINHLVVLAMDPPLRQGQTTYPFLVLQFQKDEETEVQLNLSDQEYEEKYKDKLKKQYDSKTHIVISHVLKGLTGRRVVVPGEYKSKYEQCAVSCSYKANEGYLYPLDNAFFFLTKPTLYIPFNDVSSVVISRAGQTSTSSRTFDLEVILRSNRGSTIFGNISKEEQQLLENFLKSKNLRVKNEEKDAQVRLQSALGSDSDDEDVNMGSAGEDDESVDEDFHVSSGDDDDEVAEEFDSEAASEGEDEDEDMDGSDRPTKKPKTE</sequence>
<evidence type="ECO:0000250" key="1"/>
<evidence type="ECO:0000250" key="2">
    <source>
        <dbReference type="UniProtKB" id="Q04636"/>
    </source>
</evidence>
<evidence type="ECO:0000256" key="3">
    <source>
        <dbReference type="SAM" id="MobiDB-lite"/>
    </source>
</evidence>
<evidence type="ECO:0000305" key="4"/>
<name>POB3_CANGA</name>
<accession>Q6FKI2</accession>
<keyword id="KW-0158">Chromosome</keyword>
<keyword id="KW-0227">DNA damage</keyword>
<keyword id="KW-0234">DNA repair</keyword>
<keyword id="KW-0235">DNA replication</keyword>
<keyword id="KW-0539">Nucleus</keyword>
<keyword id="KW-1185">Reference proteome</keyword>
<keyword id="KW-0804">Transcription</keyword>
<keyword id="KW-0805">Transcription regulation</keyword>
<comment type="function">
    <text evidence="1">Component of the FACT complex, a general chromatin factor that acts to reorganize nucleosomes. The FACT complex is involved in multiple processes that require DNA as a template such as mRNA elongation, DNA replication and DNA repair. During transcription elongation the FACT complex acts as a histone chaperone that both destabilizes and restores nucleosomal structure. It facilitates the passage of RNA polymerase II and transcription by promoting the dissociation of one histone H2A-H2B dimer from the nucleosome, then subsequently promotes the reestablishment of the nucleosome following the passage of RNA polymerase II (By similarity).</text>
</comment>
<comment type="subunit">
    <text evidence="1">Forms a stable heterodimer with SPT16. The SPT16-POB3 dimer weakly associates with multiple molecules of NHP6 to form the FACT complex (By similarity).</text>
</comment>
<comment type="subcellular location">
    <subcellularLocation>
        <location evidence="2">Nucleus</location>
    </subcellularLocation>
    <subcellularLocation>
        <location evidence="2">Chromosome</location>
    </subcellularLocation>
    <text evidence="2">Colocalizes with RNA polymerase II on chromatin. Recruited to actively transcribed loci.</text>
</comment>
<comment type="miscellaneous">
    <text>In contrast to the orthologous protein in animals and plants, this protein does not contain a HMG box DNA-binding domain. This function may instead be provided by the HMG box of the associated NHP6 protein in the FACT complex of fungi.</text>
</comment>
<comment type="similarity">
    <text evidence="4">Belongs to the SSRP1 family.</text>
</comment>
<proteinExistence type="inferred from homology"/>
<protein>
    <recommendedName>
        <fullName>FACT complex subunit POB3</fullName>
    </recommendedName>
    <alternativeName>
        <fullName>Facilitates chromatin transcription complex subunit POB3</fullName>
    </alternativeName>
</protein>
<gene>
    <name type="primary">POB3</name>
    <name type="ordered locus">CAGL0L11352g</name>
</gene>